<sequence>MNDLIINHIAELILPRSTDKPLKGKELDELNVVKNGTVVIKDGKIVYAGTHTDDYDATETIDASGKVVSPALVDAHTHLTFGGSREHEMSLKRQGKSYLEILEMGGGILSTVNATRETSEDDLFKKAEHDLLTMIKHGVLAVESKSGYGLDRENELKQLKVSNRLAEKYDLDMKHTFLGPHAVPKEASSNEAFLEEMIALLPEVKQYADFADIFCETGVFTIEQSQHYMQKAKEAGFKVKIHADEIDPLGGLELAIDEQAISADHLVASSDKGKEKLRNSDTVAVLLPATTFYLGKEDYADARGMLDNNGAIALATDYNPGSSVTNNLQLVMAIAALKLKLSPNEVWNAVTVNAAKAIDINAGTINTGDKANLVIWDAPNHEYIPYHFGINHAEKVIKDGKVIVDNTVSFKA</sequence>
<gene>
    <name evidence="1" type="primary">hutI</name>
    <name type="ordered locus">USA300HOU_2310</name>
</gene>
<dbReference type="EC" id="3.5.2.7" evidence="1"/>
<dbReference type="EMBL" id="CP000730">
    <property type="protein sequence ID" value="ABX30302.1"/>
    <property type="molecule type" value="Genomic_DNA"/>
</dbReference>
<dbReference type="RefSeq" id="WP_000998767.1">
    <property type="nucleotide sequence ID" value="NC_010079.1"/>
</dbReference>
<dbReference type="SMR" id="A8Z519"/>
<dbReference type="KEGG" id="sax:USA300HOU_2310"/>
<dbReference type="HOGENOM" id="CLU_041647_0_1_9"/>
<dbReference type="UniPathway" id="UPA00379">
    <property type="reaction ID" value="UER00551"/>
</dbReference>
<dbReference type="GO" id="GO:0005737">
    <property type="term" value="C:cytoplasm"/>
    <property type="evidence" value="ECO:0007669"/>
    <property type="project" value="UniProtKB-SubCell"/>
</dbReference>
<dbReference type="GO" id="GO:0050480">
    <property type="term" value="F:imidazolonepropionase activity"/>
    <property type="evidence" value="ECO:0007669"/>
    <property type="project" value="UniProtKB-UniRule"/>
</dbReference>
<dbReference type="GO" id="GO:0005506">
    <property type="term" value="F:iron ion binding"/>
    <property type="evidence" value="ECO:0007669"/>
    <property type="project" value="UniProtKB-UniRule"/>
</dbReference>
<dbReference type="GO" id="GO:0008270">
    <property type="term" value="F:zinc ion binding"/>
    <property type="evidence" value="ECO:0007669"/>
    <property type="project" value="UniProtKB-UniRule"/>
</dbReference>
<dbReference type="GO" id="GO:0019556">
    <property type="term" value="P:L-histidine catabolic process to glutamate and formamide"/>
    <property type="evidence" value="ECO:0007669"/>
    <property type="project" value="UniProtKB-UniPathway"/>
</dbReference>
<dbReference type="GO" id="GO:0019557">
    <property type="term" value="P:L-histidine catabolic process to glutamate and formate"/>
    <property type="evidence" value="ECO:0007669"/>
    <property type="project" value="UniProtKB-UniPathway"/>
</dbReference>
<dbReference type="CDD" id="cd01296">
    <property type="entry name" value="Imidazolone-5PH"/>
    <property type="match status" value="1"/>
</dbReference>
<dbReference type="FunFam" id="3.20.20.140:FF:000007">
    <property type="entry name" value="Imidazolonepropionase"/>
    <property type="match status" value="1"/>
</dbReference>
<dbReference type="Gene3D" id="3.20.20.140">
    <property type="entry name" value="Metal-dependent hydrolases"/>
    <property type="match status" value="1"/>
</dbReference>
<dbReference type="Gene3D" id="2.30.40.10">
    <property type="entry name" value="Urease, subunit C, domain 1"/>
    <property type="match status" value="1"/>
</dbReference>
<dbReference type="HAMAP" id="MF_00372">
    <property type="entry name" value="HutI"/>
    <property type="match status" value="1"/>
</dbReference>
<dbReference type="InterPro" id="IPR006680">
    <property type="entry name" value="Amidohydro-rel"/>
</dbReference>
<dbReference type="InterPro" id="IPR005920">
    <property type="entry name" value="HutI"/>
</dbReference>
<dbReference type="InterPro" id="IPR011059">
    <property type="entry name" value="Metal-dep_hydrolase_composite"/>
</dbReference>
<dbReference type="InterPro" id="IPR032466">
    <property type="entry name" value="Metal_Hydrolase"/>
</dbReference>
<dbReference type="NCBIfam" id="TIGR01224">
    <property type="entry name" value="hutI"/>
    <property type="match status" value="1"/>
</dbReference>
<dbReference type="PANTHER" id="PTHR42752">
    <property type="entry name" value="IMIDAZOLONEPROPIONASE"/>
    <property type="match status" value="1"/>
</dbReference>
<dbReference type="PANTHER" id="PTHR42752:SF1">
    <property type="entry name" value="IMIDAZOLONEPROPIONASE-RELATED"/>
    <property type="match status" value="1"/>
</dbReference>
<dbReference type="Pfam" id="PF01979">
    <property type="entry name" value="Amidohydro_1"/>
    <property type="match status" value="1"/>
</dbReference>
<dbReference type="SUPFAM" id="SSF51338">
    <property type="entry name" value="Composite domain of metallo-dependent hydrolases"/>
    <property type="match status" value="1"/>
</dbReference>
<dbReference type="SUPFAM" id="SSF51556">
    <property type="entry name" value="Metallo-dependent hydrolases"/>
    <property type="match status" value="1"/>
</dbReference>
<organism>
    <name type="scientific">Staphylococcus aureus (strain USA300 / TCH1516)</name>
    <dbReference type="NCBI Taxonomy" id="451516"/>
    <lineage>
        <taxon>Bacteria</taxon>
        <taxon>Bacillati</taxon>
        <taxon>Bacillota</taxon>
        <taxon>Bacilli</taxon>
        <taxon>Bacillales</taxon>
        <taxon>Staphylococcaceae</taxon>
        <taxon>Staphylococcus</taxon>
    </lineage>
</organism>
<proteinExistence type="inferred from homology"/>
<evidence type="ECO:0000255" key="1">
    <source>
        <dbReference type="HAMAP-Rule" id="MF_00372"/>
    </source>
</evidence>
<protein>
    <recommendedName>
        <fullName evidence="1">Imidazolonepropionase</fullName>
        <ecNumber evidence="1">3.5.2.7</ecNumber>
    </recommendedName>
    <alternativeName>
        <fullName evidence="1">Imidazolone-5-propionate hydrolase</fullName>
    </alternativeName>
</protein>
<accession>A8Z519</accession>
<feature type="chain" id="PRO_1000079834" description="Imidazolonepropionase">
    <location>
        <begin position="1"/>
        <end position="412"/>
    </location>
</feature>
<feature type="binding site" evidence="1">
    <location>
        <position position="76"/>
    </location>
    <ligand>
        <name>Fe(3+)</name>
        <dbReference type="ChEBI" id="CHEBI:29034"/>
    </ligand>
</feature>
<feature type="binding site" evidence="1">
    <location>
        <position position="76"/>
    </location>
    <ligand>
        <name>Zn(2+)</name>
        <dbReference type="ChEBI" id="CHEBI:29105"/>
    </ligand>
</feature>
<feature type="binding site" evidence="1">
    <location>
        <position position="78"/>
    </location>
    <ligand>
        <name>Fe(3+)</name>
        <dbReference type="ChEBI" id="CHEBI:29034"/>
    </ligand>
</feature>
<feature type="binding site" evidence="1">
    <location>
        <position position="78"/>
    </location>
    <ligand>
        <name>Zn(2+)</name>
        <dbReference type="ChEBI" id="CHEBI:29105"/>
    </ligand>
</feature>
<feature type="binding site" evidence="1">
    <location>
        <position position="85"/>
    </location>
    <ligand>
        <name>4-imidazolone-5-propanoate</name>
        <dbReference type="ChEBI" id="CHEBI:77893"/>
    </ligand>
</feature>
<feature type="binding site" evidence="1">
    <location>
        <position position="148"/>
    </location>
    <ligand>
        <name>4-imidazolone-5-propanoate</name>
        <dbReference type="ChEBI" id="CHEBI:77893"/>
    </ligand>
</feature>
<feature type="binding site" evidence="1">
    <location>
        <position position="148"/>
    </location>
    <ligand>
        <name>N-formimidoyl-L-glutamate</name>
        <dbReference type="ChEBI" id="CHEBI:58928"/>
    </ligand>
</feature>
<feature type="binding site" evidence="1">
    <location>
        <position position="181"/>
    </location>
    <ligand>
        <name>4-imidazolone-5-propanoate</name>
        <dbReference type="ChEBI" id="CHEBI:77893"/>
    </ligand>
</feature>
<feature type="binding site" evidence="1">
    <location>
        <position position="242"/>
    </location>
    <ligand>
        <name>Fe(3+)</name>
        <dbReference type="ChEBI" id="CHEBI:29034"/>
    </ligand>
</feature>
<feature type="binding site" evidence="1">
    <location>
        <position position="242"/>
    </location>
    <ligand>
        <name>Zn(2+)</name>
        <dbReference type="ChEBI" id="CHEBI:29105"/>
    </ligand>
</feature>
<feature type="binding site" evidence="1">
    <location>
        <position position="245"/>
    </location>
    <ligand>
        <name>4-imidazolone-5-propanoate</name>
        <dbReference type="ChEBI" id="CHEBI:77893"/>
    </ligand>
</feature>
<feature type="binding site" evidence="1">
    <location>
        <position position="317"/>
    </location>
    <ligand>
        <name>Fe(3+)</name>
        <dbReference type="ChEBI" id="CHEBI:29034"/>
    </ligand>
</feature>
<feature type="binding site" evidence="1">
    <location>
        <position position="317"/>
    </location>
    <ligand>
        <name>Zn(2+)</name>
        <dbReference type="ChEBI" id="CHEBI:29105"/>
    </ligand>
</feature>
<feature type="binding site" evidence="1">
    <location>
        <position position="319"/>
    </location>
    <ligand>
        <name>N-formimidoyl-L-glutamate</name>
        <dbReference type="ChEBI" id="CHEBI:58928"/>
    </ligand>
</feature>
<feature type="binding site" evidence="1">
    <location>
        <position position="321"/>
    </location>
    <ligand>
        <name>N-formimidoyl-L-glutamate</name>
        <dbReference type="ChEBI" id="CHEBI:58928"/>
    </ligand>
</feature>
<feature type="binding site" evidence="1">
    <location>
        <position position="322"/>
    </location>
    <ligand>
        <name>4-imidazolone-5-propanoate</name>
        <dbReference type="ChEBI" id="CHEBI:77893"/>
    </ligand>
</feature>
<comment type="function">
    <text evidence="1">Catalyzes the hydrolytic cleavage of the carbon-nitrogen bond in imidazolone-5-propanoate to yield N-formimidoyl-L-glutamate. It is the third step in the universal histidine degradation pathway.</text>
</comment>
<comment type="catalytic activity">
    <reaction evidence="1">
        <text>4-imidazolone-5-propanoate + H2O = N-formimidoyl-L-glutamate</text>
        <dbReference type="Rhea" id="RHEA:23660"/>
        <dbReference type="ChEBI" id="CHEBI:15377"/>
        <dbReference type="ChEBI" id="CHEBI:58928"/>
        <dbReference type="ChEBI" id="CHEBI:77893"/>
        <dbReference type="EC" id="3.5.2.7"/>
    </reaction>
</comment>
<comment type="cofactor">
    <cofactor evidence="1">
        <name>Zn(2+)</name>
        <dbReference type="ChEBI" id="CHEBI:29105"/>
    </cofactor>
    <cofactor evidence="1">
        <name>Fe(3+)</name>
        <dbReference type="ChEBI" id="CHEBI:29034"/>
    </cofactor>
    <text evidence="1">Binds 1 zinc or iron ion per subunit.</text>
</comment>
<comment type="pathway">
    <text evidence="1">Amino-acid degradation; L-histidine degradation into L-glutamate; N-formimidoyl-L-glutamate from L-histidine: step 3/3.</text>
</comment>
<comment type="subcellular location">
    <subcellularLocation>
        <location evidence="1">Cytoplasm</location>
    </subcellularLocation>
</comment>
<comment type="similarity">
    <text evidence="1">Belongs to the metallo-dependent hydrolases superfamily. HutI family.</text>
</comment>
<keyword id="KW-0963">Cytoplasm</keyword>
<keyword id="KW-0369">Histidine metabolism</keyword>
<keyword id="KW-0378">Hydrolase</keyword>
<keyword id="KW-0408">Iron</keyword>
<keyword id="KW-0479">Metal-binding</keyword>
<keyword id="KW-0862">Zinc</keyword>
<name>HUTI_STAAT</name>
<reference key="1">
    <citation type="journal article" date="2007" name="BMC Microbiol.">
        <title>Subtle genetic changes enhance virulence of methicillin resistant and sensitive Staphylococcus aureus.</title>
        <authorList>
            <person name="Highlander S.K."/>
            <person name="Hulten K.G."/>
            <person name="Qin X."/>
            <person name="Jiang H."/>
            <person name="Yerrapragada S."/>
            <person name="Mason E.O. Jr."/>
            <person name="Shang Y."/>
            <person name="Williams T.M."/>
            <person name="Fortunov R.M."/>
            <person name="Liu Y."/>
            <person name="Igboeli O."/>
            <person name="Petrosino J."/>
            <person name="Tirumalai M."/>
            <person name="Uzman A."/>
            <person name="Fox G.E."/>
            <person name="Cardenas A.M."/>
            <person name="Muzny D.M."/>
            <person name="Hemphill L."/>
            <person name="Ding Y."/>
            <person name="Dugan S."/>
            <person name="Blyth P.R."/>
            <person name="Buhay C.J."/>
            <person name="Dinh H.H."/>
            <person name="Hawes A.C."/>
            <person name="Holder M."/>
            <person name="Kovar C.L."/>
            <person name="Lee S.L."/>
            <person name="Liu W."/>
            <person name="Nazareth L.V."/>
            <person name="Wang Q."/>
            <person name="Zhou J."/>
            <person name="Kaplan S.L."/>
            <person name="Weinstock G.M."/>
        </authorList>
    </citation>
    <scope>NUCLEOTIDE SEQUENCE [LARGE SCALE GENOMIC DNA]</scope>
    <source>
        <strain>USA300 / TCH1516</strain>
    </source>
</reference>